<comment type="function">
    <text evidence="1">Orphan G-protein coupled receptor involved in the regulation of hair cell orientation in mechanosensory organs of the inner ear. It is required to trigger a 180 degree reversal in hair cell orientation, creating a virtual line of polarity reversal (LPR) across which stereociliary bundles are arranged in opposite orientations.</text>
</comment>
<comment type="subcellular location">
    <subcellularLocation>
        <location>Cell membrane</location>
        <topology>Multi-pass membrane protein</topology>
    </subcellularLocation>
</comment>
<comment type="alternative products">
    <event type="alternative splicing"/>
    <isoform>
        <id>Q8NFN8-1</id>
        <name>1</name>
        <sequence type="displayed"/>
    </isoform>
    <isoform>
        <id>Q8NFN8-2</id>
        <name>2</name>
        <sequence type="described" ref="VSP_044603"/>
    </isoform>
</comment>
<comment type="tissue specificity">
    <text evidence="4">Ubiquitous expression both in the CNS and in peripheral tissues. Very high expression in fetal brain and testis relative to expression in other tissues.</text>
</comment>
<comment type="disease" evidence="6 7">
    <disease id="DI-06784">
        <name>Deafness, autosomal recessive, 121</name>
        <acronym>DFNB121</acronym>
        <description>A form of non-syndromic deafness characterized by congenital or prelingual onset of moderate sensorineural hearing loss. Sensorineural hearing loss results from damage to the neural receptors of the inner ear, the nerve pathways to the brain, or the area of the brain that receives sound information.</description>
        <dbReference type="MIM" id="620551"/>
    </disease>
    <text>The disease is caused by variants affecting the gene represented in this entry.</text>
</comment>
<comment type="similarity">
    <text evidence="9">Belongs to the G-protein coupled receptor 3 family. GABA-B receptor subfamily.</text>
</comment>
<organism>
    <name type="scientific">Homo sapiens</name>
    <name type="common">Human</name>
    <dbReference type="NCBI Taxonomy" id="9606"/>
    <lineage>
        <taxon>Eukaryota</taxon>
        <taxon>Metazoa</taxon>
        <taxon>Chordata</taxon>
        <taxon>Craniata</taxon>
        <taxon>Vertebrata</taxon>
        <taxon>Euteleostomi</taxon>
        <taxon>Mammalia</taxon>
        <taxon>Eutheria</taxon>
        <taxon>Euarchontoglires</taxon>
        <taxon>Primates</taxon>
        <taxon>Haplorrhini</taxon>
        <taxon>Catarrhini</taxon>
        <taxon>Hominidae</taxon>
        <taxon>Homo</taxon>
    </lineage>
</organism>
<dbReference type="EMBL" id="AF488739">
    <property type="protein sequence ID" value="AAN03795.1"/>
    <property type="molecule type" value="mRNA"/>
</dbReference>
<dbReference type="EMBL" id="AC063952">
    <property type="status" value="NOT_ANNOTATED_CDS"/>
    <property type="molecule type" value="Genomic_DNA"/>
</dbReference>
<dbReference type="EMBL" id="AC092897">
    <property type="status" value="NOT_ANNOTATED_CDS"/>
    <property type="molecule type" value="Genomic_DNA"/>
</dbReference>
<dbReference type="EMBL" id="BC113701">
    <property type="protein sequence ID" value="AAI13702.1"/>
    <property type="molecule type" value="mRNA"/>
</dbReference>
<dbReference type="EMBL" id="BC143606">
    <property type="protein sequence ID" value="AAI43607.1"/>
    <property type="molecule type" value="mRNA"/>
</dbReference>
<dbReference type="EMBL" id="AY255565">
    <property type="protein sequence ID" value="AAO85077.1"/>
    <property type="molecule type" value="mRNA"/>
</dbReference>
<dbReference type="CCDS" id="CCDS2997.1">
    <molecule id="Q8NFN8-1"/>
</dbReference>
<dbReference type="CCDS" id="CCDS54629.1">
    <molecule id="Q8NFN8-2"/>
</dbReference>
<dbReference type="RefSeq" id="NP_001161743.1">
    <molecule id="Q8NFN8-2"/>
    <property type="nucleotide sequence ID" value="NM_001168271.2"/>
</dbReference>
<dbReference type="RefSeq" id="NP_694547.2">
    <molecule id="Q8NFN8-1"/>
    <property type="nucleotide sequence ID" value="NM_153002.3"/>
</dbReference>
<dbReference type="RefSeq" id="XP_005247222.1">
    <property type="nucleotide sequence ID" value="XM_005247165.2"/>
</dbReference>
<dbReference type="RefSeq" id="XP_016861284.1">
    <molecule id="Q8NFN8-1"/>
    <property type="nucleotide sequence ID" value="XM_017005795.2"/>
</dbReference>
<dbReference type="RefSeq" id="XP_016861285.1">
    <molecule id="Q8NFN8-1"/>
    <property type="nucleotide sequence ID" value="XM_017005796.2"/>
</dbReference>
<dbReference type="RefSeq" id="XP_016861286.1">
    <property type="nucleotide sequence ID" value="XM_017005797.1"/>
</dbReference>
<dbReference type="PDB" id="8IEB">
    <property type="method" value="EM"/>
    <property type="resolution" value="3.03 A"/>
    <property type="chains" value="A/B=1-557"/>
</dbReference>
<dbReference type="PDB" id="8IED">
    <property type="method" value="EM"/>
    <property type="resolution" value="3.33 A"/>
    <property type="chains" value="A/B=1-557"/>
</dbReference>
<dbReference type="PDB" id="8IEI">
    <property type="method" value="EM"/>
    <property type="resolution" value="2.62 A"/>
    <property type="chains" value="A/B=1-557"/>
</dbReference>
<dbReference type="PDB" id="8IEP">
    <property type="method" value="EM"/>
    <property type="resolution" value="2.61 A"/>
    <property type="chains" value="C/D=1-557"/>
</dbReference>
<dbReference type="PDB" id="8IEQ">
    <property type="method" value="EM"/>
    <property type="resolution" value="2.73 A"/>
    <property type="chains" value="A/B/C/D=1-557"/>
</dbReference>
<dbReference type="PDB" id="8YJP">
    <property type="method" value="EM"/>
    <property type="resolution" value="3.09 A"/>
    <property type="chains" value="A/B=1-346"/>
</dbReference>
<dbReference type="PDB" id="8YK0">
    <property type="method" value="EM"/>
    <property type="resolution" value="2.40 A"/>
    <property type="chains" value="A=22-338, B=22-319"/>
</dbReference>
<dbReference type="PDBsum" id="8IEB"/>
<dbReference type="PDBsum" id="8IED"/>
<dbReference type="PDBsum" id="8IEI"/>
<dbReference type="PDBsum" id="8IEP"/>
<dbReference type="PDBsum" id="8IEQ"/>
<dbReference type="PDBsum" id="8YJP"/>
<dbReference type="PDBsum" id="8YK0"/>
<dbReference type="EMDB" id="EMD-35377"/>
<dbReference type="EMDB" id="EMD-35380"/>
<dbReference type="EMDB" id="EMD-35382"/>
<dbReference type="EMDB" id="EMD-35389"/>
<dbReference type="EMDB" id="EMD-35390"/>
<dbReference type="EMDB" id="EMD-39345"/>
<dbReference type="EMDB" id="EMD-39356"/>
<dbReference type="SMR" id="Q8NFN8"/>
<dbReference type="BioGRID" id="127920">
    <property type="interactions" value="75"/>
</dbReference>
<dbReference type="FunCoup" id="Q8NFN8">
    <property type="interactions" value="791"/>
</dbReference>
<dbReference type="IntAct" id="Q8NFN8">
    <property type="interactions" value="70"/>
</dbReference>
<dbReference type="STRING" id="9606.ENSP00000417261"/>
<dbReference type="ChEMBL" id="CHEMBL4523897"/>
<dbReference type="TCDB" id="9.A.14.15.4">
    <property type="family name" value="the g-protein-coupled receptor (gpcr) family"/>
</dbReference>
<dbReference type="GlyCosmos" id="Q8NFN8">
    <property type="glycosylation" value="1 site, No reported glycans"/>
</dbReference>
<dbReference type="GlyGen" id="Q8NFN8">
    <property type="glycosylation" value="1 site"/>
</dbReference>
<dbReference type="iPTMnet" id="Q8NFN8"/>
<dbReference type="PhosphoSitePlus" id="Q8NFN8"/>
<dbReference type="BioMuta" id="GPR156"/>
<dbReference type="DMDM" id="296434518"/>
<dbReference type="PaxDb" id="9606-ENSP00000417261"/>
<dbReference type="PeptideAtlas" id="Q8NFN8"/>
<dbReference type="ProteomicsDB" id="20211"/>
<dbReference type="ProteomicsDB" id="73328">
    <molecule id="Q8NFN8-1"/>
</dbReference>
<dbReference type="Antibodypedia" id="32788">
    <property type="antibodies" value="80 antibodies from 23 providers"/>
</dbReference>
<dbReference type="DNASU" id="165829"/>
<dbReference type="Ensembl" id="ENST00000461057.1">
    <molecule id="Q8NFN8-2"/>
    <property type="protein sequence ID" value="ENSP00000418758.1"/>
    <property type="gene ID" value="ENSG00000175697.11"/>
</dbReference>
<dbReference type="Ensembl" id="ENST00000464295.6">
    <molecule id="Q8NFN8-1"/>
    <property type="protein sequence ID" value="ENSP00000417261.1"/>
    <property type="gene ID" value="ENSG00000175697.11"/>
</dbReference>
<dbReference type="GeneID" id="165829"/>
<dbReference type="KEGG" id="hsa:165829"/>
<dbReference type="MANE-Select" id="ENST00000464295.6">
    <property type="protein sequence ID" value="ENSP00000417261.1"/>
    <property type="RefSeq nucleotide sequence ID" value="NM_153002.3"/>
    <property type="RefSeq protein sequence ID" value="NP_694547.2"/>
</dbReference>
<dbReference type="UCSC" id="uc011bjf.3">
    <molecule id="Q8NFN8-1"/>
    <property type="organism name" value="human"/>
</dbReference>
<dbReference type="AGR" id="HGNC:20844"/>
<dbReference type="CTD" id="165829"/>
<dbReference type="DisGeNET" id="165829"/>
<dbReference type="GeneCards" id="GPR156"/>
<dbReference type="HGNC" id="HGNC:20844">
    <property type="gene designation" value="GPR156"/>
</dbReference>
<dbReference type="HPA" id="ENSG00000175697">
    <property type="expression patterns" value="Tissue enhanced (testis)"/>
</dbReference>
<dbReference type="MalaCards" id="GPR156"/>
<dbReference type="MIM" id="610464">
    <property type="type" value="gene"/>
</dbReference>
<dbReference type="MIM" id="620551">
    <property type="type" value="phenotype"/>
</dbReference>
<dbReference type="neXtProt" id="NX_Q8NFN8"/>
<dbReference type="OpenTargets" id="ENSG00000175697"/>
<dbReference type="PharmGKB" id="PA134918005"/>
<dbReference type="VEuPathDB" id="HostDB:ENSG00000175697"/>
<dbReference type="eggNOG" id="KOG1055">
    <property type="taxonomic scope" value="Eukaryota"/>
</dbReference>
<dbReference type="GeneTree" id="ENSGT00940000159755"/>
<dbReference type="HOGENOM" id="CLU_350195_0_0_1"/>
<dbReference type="InParanoid" id="Q8NFN8"/>
<dbReference type="OMA" id="THFCASQ"/>
<dbReference type="OrthoDB" id="411630at2759"/>
<dbReference type="PAN-GO" id="Q8NFN8">
    <property type="GO annotations" value="3 GO annotations based on evolutionary models"/>
</dbReference>
<dbReference type="PhylomeDB" id="Q8NFN8"/>
<dbReference type="TreeFam" id="TF313965"/>
<dbReference type="PathwayCommons" id="Q8NFN8"/>
<dbReference type="SignaLink" id="Q8NFN8"/>
<dbReference type="BioGRID-ORCS" id="165829">
    <property type="hits" value="18 hits in 1150 CRISPR screens"/>
</dbReference>
<dbReference type="ChiTaRS" id="GPR156">
    <property type="organism name" value="human"/>
</dbReference>
<dbReference type="GeneWiki" id="GPR156"/>
<dbReference type="GenomeRNAi" id="165829"/>
<dbReference type="Pharos" id="Q8NFN8">
    <property type="development level" value="Tdark"/>
</dbReference>
<dbReference type="PRO" id="PR:Q8NFN8"/>
<dbReference type="Proteomes" id="UP000005640">
    <property type="component" value="Chromosome 3"/>
</dbReference>
<dbReference type="RNAct" id="Q8NFN8">
    <property type="molecule type" value="protein"/>
</dbReference>
<dbReference type="Bgee" id="ENSG00000175697">
    <property type="expression patterns" value="Expressed in ventricular zone and 129 other cell types or tissues"/>
</dbReference>
<dbReference type="ExpressionAtlas" id="Q8NFN8">
    <property type="expression patterns" value="baseline and differential"/>
</dbReference>
<dbReference type="GO" id="GO:0038039">
    <property type="term" value="C:G protein-coupled receptor heterodimeric complex"/>
    <property type="evidence" value="ECO:0000318"/>
    <property type="project" value="GO_Central"/>
</dbReference>
<dbReference type="GO" id="GO:0005886">
    <property type="term" value="C:plasma membrane"/>
    <property type="evidence" value="ECO:0000314"/>
    <property type="project" value="HPA"/>
</dbReference>
<dbReference type="GO" id="GO:0004965">
    <property type="term" value="F:G protein-coupled GABA receptor activity"/>
    <property type="evidence" value="ECO:0000318"/>
    <property type="project" value="GO_Central"/>
</dbReference>
<dbReference type="GO" id="GO:0007214">
    <property type="term" value="P:gamma-aminobutyric acid signaling pathway"/>
    <property type="evidence" value="ECO:0000318"/>
    <property type="project" value="GO_Central"/>
</dbReference>
<dbReference type="GO" id="GO:0160194">
    <property type="term" value="P:stereocilium bundle organization"/>
    <property type="evidence" value="ECO:0000250"/>
    <property type="project" value="UniProtKB"/>
</dbReference>
<dbReference type="CDD" id="cd15292">
    <property type="entry name" value="7tmC_GPR156"/>
    <property type="match status" value="1"/>
</dbReference>
<dbReference type="InterPro" id="IPR002455">
    <property type="entry name" value="GPCR3_GABA-B"/>
</dbReference>
<dbReference type="InterPro" id="IPR017978">
    <property type="entry name" value="GPCR_3_C"/>
</dbReference>
<dbReference type="InterPro" id="IPR041946">
    <property type="entry name" value="GPR156_7TM"/>
</dbReference>
<dbReference type="PANTHER" id="PTHR10519:SF20">
    <property type="entry name" value="G-PROTEIN COUPLED RECEPTOR 156-RELATED"/>
    <property type="match status" value="1"/>
</dbReference>
<dbReference type="PANTHER" id="PTHR10519">
    <property type="entry name" value="GABA-B RECEPTOR"/>
    <property type="match status" value="1"/>
</dbReference>
<dbReference type="Pfam" id="PF00003">
    <property type="entry name" value="7tm_3"/>
    <property type="match status" value="1"/>
</dbReference>
<dbReference type="PRINTS" id="PR01176">
    <property type="entry name" value="GABABRECEPTR"/>
</dbReference>
<dbReference type="PROSITE" id="PS50259">
    <property type="entry name" value="G_PROTEIN_RECEP_F3_4"/>
    <property type="match status" value="1"/>
</dbReference>
<feature type="chain" id="PRO_0000206899" description="Probable G-protein coupled receptor 156">
    <location>
        <begin position="1"/>
        <end position="814"/>
    </location>
</feature>
<feature type="topological domain" description="Extracellular" evidence="2">
    <location>
        <begin position="1"/>
        <end position="47"/>
    </location>
</feature>
<feature type="transmembrane region" description="Helical" evidence="2">
    <location>
        <begin position="48"/>
        <end position="68"/>
    </location>
</feature>
<feature type="topological domain" description="Cytoplasmic" evidence="2">
    <location>
        <begin position="69"/>
        <end position="86"/>
    </location>
</feature>
<feature type="transmembrane region" description="Helical" evidence="2">
    <location>
        <begin position="87"/>
        <end position="107"/>
    </location>
</feature>
<feature type="topological domain" description="Extracellular" evidence="2">
    <location>
        <begin position="108"/>
        <end position="118"/>
    </location>
</feature>
<feature type="transmembrane region" description="Helical" evidence="2">
    <location>
        <begin position="119"/>
        <end position="139"/>
    </location>
</feature>
<feature type="topological domain" description="Cytoplasmic" evidence="2">
    <location>
        <begin position="140"/>
        <end position="164"/>
    </location>
</feature>
<feature type="transmembrane region" description="Helical" evidence="2">
    <location>
        <begin position="165"/>
        <end position="185"/>
    </location>
</feature>
<feature type="topological domain" description="Extracellular" evidence="2">
    <location>
        <begin position="186"/>
        <end position="222"/>
    </location>
</feature>
<feature type="transmembrane region" description="Helical" evidence="2">
    <location>
        <begin position="223"/>
        <end position="243"/>
    </location>
</feature>
<feature type="topological domain" description="Cytoplasmic" evidence="2">
    <location>
        <begin position="244"/>
        <end position="257"/>
    </location>
</feature>
<feature type="transmembrane region" description="Helical" evidence="2">
    <location>
        <begin position="258"/>
        <end position="278"/>
    </location>
</feature>
<feature type="topological domain" description="Extracellular" evidence="2">
    <location>
        <begin position="279"/>
        <end position="288"/>
    </location>
</feature>
<feature type="transmembrane region" description="Helical" evidence="2">
    <location>
        <begin position="289"/>
        <end position="309"/>
    </location>
</feature>
<feature type="topological domain" description="Cytoplasmic" evidence="2">
    <location>
        <begin position="310"/>
        <end position="814"/>
    </location>
</feature>
<feature type="region of interest" description="Disordered" evidence="3">
    <location>
        <begin position="422"/>
        <end position="545"/>
    </location>
</feature>
<feature type="region of interest" description="Disordered" evidence="3">
    <location>
        <begin position="557"/>
        <end position="724"/>
    </location>
</feature>
<feature type="region of interest" description="Disordered" evidence="3">
    <location>
        <begin position="769"/>
        <end position="792"/>
    </location>
</feature>
<feature type="coiled-coil region" evidence="2">
    <location>
        <begin position="354"/>
        <end position="390"/>
    </location>
</feature>
<feature type="compositionally biased region" description="Polar residues" evidence="3">
    <location>
        <begin position="443"/>
        <end position="454"/>
    </location>
</feature>
<feature type="compositionally biased region" description="Basic and acidic residues" evidence="3">
    <location>
        <begin position="468"/>
        <end position="484"/>
    </location>
</feature>
<feature type="compositionally biased region" description="Polar residues" evidence="3">
    <location>
        <begin position="486"/>
        <end position="496"/>
    </location>
</feature>
<feature type="compositionally biased region" description="Basic and acidic residues" evidence="3">
    <location>
        <begin position="523"/>
        <end position="545"/>
    </location>
</feature>
<feature type="compositionally biased region" description="Polar residues" evidence="3">
    <location>
        <begin position="563"/>
        <end position="581"/>
    </location>
</feature>
<feature type="compositionally biased region" description="Basic residues" evidence="3">
    <location>
        <begin position="599"/>
        <end position="610"/>
    </location>
</feature>
<feature type="compositionally biased region" description="Polar residues" evidence="3">
    <location>
        <begin position="639"/>
        <end position="651"/>
    </location>
</feature>
<feature type="compositionally biased region" description="Low complexity" evidence="3">
    <location>
        <begin position="769"/>
        <end position="780"/>
    </location>
</feature>
<feature type="glycosylation site" description="N-linked (GlcNAc...) asparagine" evidence="2">
    <location>
        <position position="6"/>
    </location>
</feature>
<feature type="splice variant" id="VSP_044603" description="In isoform 2." evidence="8">
    <location>
        <begin position="197"/>
        <end position="200"/>
    </location>
</feature>
<feature type="sequence variant" id="VAR_049284" description="In dbSNP:rs902790." evidence="4 5">
    <original>E</original>
    <variation>D</variation>
    <location>
        <position position="516"/>
    </location>
</feature>
<feature type="helix" evidence="12">
    <location>
        <begin position="47"/>
        <end position="73"/>
    </location>
</feature>
<feature type="strand" evidence="12">
    <location>
        <begin position="75"/>
        <end position="77"/>
    </location>
</feature>
<feature type="helix" evidence="12">
    <location>
        <begin position="78"/>
        <end position="81"/>
    </location>
</feature>
<feature type="helix" evidence="12">
    <location>
        <begin position="85"/>
        <end position="104"/>
    </location>
</feature>
<feature type="strand" evidence="11">
    <location>
        <begin position="111"/>
        <end position="113"/>
    </location>
</feature>
<feature type="helix" evidence="12">
    <location>
        <begin position="116"/>
        <end position="149"/>
    </location>
</feature>
<feature type="turn" evidence="10">
    <location>
        <begin position="151"/>
        <end position="154"/>
    </location>
</feature>
<feature type="helix" evidence="12">
    <location>
        <begin position="162"/>
        <end position="186"/>
    </location>
</feature>
<feature type="strand" evidence="12">
    <location>
        <begin position="191"/>
        <end position="201"/>
    </location>
</feature>
<feature type="strand" evidence="12">
    <location>
        <begin position="206"/>
        <end position="216"/>
    </location>
</feature>
<feature type="helix" evidence="12">
    <location>
        <begin position="221"/>
        <end position="245"/>
    </location>
</feature>
<feature type="turn" evidence="12">
    <location>
        <begin position="246"/>
        <end position="248"/>
    </location>
</feature>
<feature type="turn" evidence="12">
    <location>
        <begin position="252"/>
        <end position="254"/>
    </location>
</feature>
<feature type="helix" evidence="12">
    <location>
        <begin position="258"/>
        <end position="280"/>
    </location>
</feature>
<feature type="helix" evidence="12">
    <location>
        <begin position="285"/>
        <end position="331"/>
    </location>
</feature>
<keyword id="KW-0002">3D-structure</keyword>
<keyword id="KW-0025">Alternative splicing</keyword>
<keyword id="KW-1003">Cell membrane</keyword>
<keyword id="KW-0175">Coiled coil</keyword>
<keyword id="KW-0209">Deafness</keyword>
<keyword id="KW-0297">G-protein coupled receptor</keyword>
<keyword id="KW-0325">Glycoprotein</keyword>
<keyword id="KW-0472">Membrane</keyword>
<keyword id="KW-1010">Non-syndromic deafness</keyword>
<keyword id="KW-1267">Proteomics identification</keyword>
<keyword id="KW-0675">Receptor</keyword>
<keyword id="KW-1185">Reference proteome</keyword>
<keyword id="KW-0807">Transducer</keyword>
<keyword id="KW-0812">Transmembrane</keyword>
<keyword id="KW-1133">Transmembrane helix</keyword>
<evidence type="ECO:0000250" key="1">
    <source>
        <dbReference type="UniProtKB" id="Q6PCP7"/>
    </source>
</evidence>
<evidence type="ECO:0000255" key="2"/>
<evidence type="ECO:0000256" key="3">
    <source>
        <dbReference type="SAM" id="MobiDB-lite"/>
    </source>
</evidence>
<evidence type="ECO:0000269" key="4">
    <source>
    </source>
</evidence>
<evidence type="ECO:0000269" key="5">
    <source>
    </source>
</evidence>
<evidence type="ECO:0000269" key="6">
    <source>
    </source>
</evidence>
<evidence type="ECO:0000269" key="7">
    <source>
    </source>
</evidence>
<evidence type="ECO:0000303" key="8">
    <source>
    </source>
</evidence>
<evidence type="ECO:0000305" key="9"/>
<evidence type="ECO:0007829" key="10">
    <source>
        <dbReference type="PDB" id="8IEB"/>
    </source>
</evidence>
<evidence type="ECO:0007829" key="11">
    <source>
        <dbReference type="PDB" id="8IEI"/>
    </source>
</evidence>
<evidence type="ECO:0007829" key="12">
    <source>
        <dbReference type="PDB" id="8IEP"/>
    </source>
</evidence>
<accession>Q8NFN8</accession>
<accession>B7ZL66</accession>
<accession>E9PFZ4</accession>
<accession>Q14CM1</accession>
<accession>Q86SN6</accession>
<gene>
    <name type="primary">GPR156</name>
    <name type="synonym">GABABL</name>
    <name type="synonym">PGR28</name>
</gene>
<sequence length="814" mass="89097">MEPEINCSELCDSFPGQELDRRPLHDLCKTTITSSHHSSKTISSLSPVLLGIVWTFLSCGLLLILFFLAFTIHCRKNRIVKMSSPNLNIVTLLGSCLTYSSAYLFGIQDVLVGSSMETLIQTRLSMLCIGTSLVFGPILGKSWRLYKVFTQRVPDKRVIIKDLQLLGLVAALLMADVILLMTWVLTDPIQCLQILSVSMTVTGKDVSCTSTSTHFCASRYSDVWIALIWGCKGLLLLYGAYLAGLTGHVSSPPVNQSLTIMVGVNLLVLAAGLLFVVTRYLHSWPNLVFGLTSGGIFVCTTTINCFIFIPQLKQWKAFEEENQTIRRMAKYFSTPNKSFHTQYGEEENCHPRGEKSSMERLLTEKNAVIESLQEQVNNAKEKIVRLMSAECTYDLPEGAAPPASSPNKDVQAVASVHTLAAAQGPSGHLSDFQNDPGMAARDSQCTSGPSSYAQSLEGPGKDSSFSPGKEEKISDSKDFSDHLDSGCSQKPWTEQSLGPERGDQVPMNPSQSLLPERGGSDPQRQRHLENSEEPPERRSRVSSVIREKLQEVLQDLGLGPEASLSTAPSCHQQTWKNSAAFSPQKMPLSKELGFSPYMVRRRRAAQRARSHFPGSAPSSVGHRANRTVPGAHSRLHVQNGDSPSLAPQTTDSRVRRPSSRKPSLPSDPQDRPGTLEGSKQSQTEPEGARGSKAAFLRQPSGSGRAPSPAAPCLSKASPDLPEQWQLWPPVPSGCASLSSQHSYFDTESSSSDEFFCRCHRPYCEICFQSSSDSSDSGTSDTDPEPTGGLASWEKLWARSKPIVNFKDDLKPTLV</sequence>
<reference key="1">
    <citation type="journal article" date="2003" name="Brain Res. Mol. Brain Res.">
        <title>Molecular cloning and characterization of a novel GABA(B)-related G-protein coupled receptor.</title>
        <authorList>
            <person name="Calver A.R."/>
            <person name="Michalovich D."/>
            <person name="Testa T.T."/>
            <person name="Robbins M.J."/>
            <person name="Jaillard C."/>
            <person name="Hill J."/>
            <person name="Szekeres P.G."/>
            <person name="Charles K.J."/>
            <person name="Jourdain S."/>
            <person name="Holbrook J.D."/>
            <person name="Boyfield I."/>
            <person name="Patel N."/>
            <person name="Medhurst A.D."/>
            <person name="Pangalos M.N."/>
        </authorList>
    </citation>
    <scope>NUCLEOTIDE SEQUENCE [MRNA] (ISOFORM 1)</scope>
    <scope>TISSUE SPECIFICITY</scope>
    <scope>VARIANT ASP-516</scope>
</reference>
<reference key="2">
    <citation type="journal article" date="2006" name="Nature">
        <title>The DNA sequence, annotation and analysis of human chromosome 3.</title>
        <authorList>
            <person name="Muzny D.M."/>
            <person name="Scherer S.E."/>
            <person name="Kaul R."/>
            <person name="Wang J."/>
            <person name="Yu J."/>
            <person name="Sudbrak R."/>
            <person name="Buhay C.J."/>
            <person name="Chen R."/>
            <person name="Cree A."/>
            <person name="Ding Y."/>
            <person name="Dugan-Rocha S."/>
            <person name="Gill R."/>
            <person name="Gunaratne P."/>
            <person name="Harris R.A."/>
            <person name="Hawes A.C."/>
            <person name="Hernandez J."/>
            <person name="Hodgson A.V."/>
            <person name="Hume J."/>
            <person name="Jackson A."/>
            <person name="Khan Z.M."/>
            <person name="Kovar-Smith C."/>
            <person name="Lewis L.R."/>
            <person name="Lozado R.J."/>
            <person name="Metzker M.L."/>
            <person name="Milosavljevic A."/>
            <person name="Miner G.R."/>
            <person name="Morgan M.B."/>
            <person name="Nazareth L.V."/>
            <person name="Scott G."/>
            <person name="Sodergren E."/>
            <person name="Song X.-Z."/>
            <person name="Steffen D."/>
            <person name="Wei S."/>
            <person name="Wheeler D.A."/>
            <person name="Wright M.W."/>
            <person name="Worley K.C."/>
            <person name="Yuan Y."/>
            <person name="Zhang Z."/>
            <person name="Adams C.Q."/>
            <person name="Ansari-Lari M.A."/>
            <person name="Ayele M."/>
            <person name="Brown M.J."/>
            <person name="Chen G."/>
            <person name="Chen Z."/>
            <person name="Clendenning J."/>
            <person name="Clerc-Blankenburg K.P."/>
            <person name="Chen R."/>
            <person name="Chen Z."/>
            <person name="Davis C."/>
            <person name="Delgado O."/>
            <person name="Dinh H.H."/>
            <person name="Dong W."/>
            <person name="Draper H."/>
            <person name="Ernst S."/>
            <person name="Fu G."/>
            <person name="Gonzalez-Garay M.L."/>
            <person name="Garcia D.K."/>
            <person name="Gillett W."/>
            <person name="Gu J."/>
            <person name="Hao B."/>
            <person name="Haugen E."/>
            <person name="Havlak P."/>
            <person name="He X."/>
            <person name="Hennig S."/>
            <person name="Hu S."/>
            <person name="Huang W."/>
            <person name="Jackson L.R."/>
            <person name="Jacob L.S."/>
            <person name="Kelly S.H."/>
            <person name="Kube M."/>
            <person name="Levy R."/>
            <person name="Li Z."/>
            <person name="Liu B."/>
            <person name="Liu J."/>
            <person name="Liu W."/>
            <person name="Lu J."/>
            <person name="Maheshwari M."/>
            <person name="Nguyen B.-V."/>
            <person name="Okwuonu G.O."/>
            <person name="Palmeiri A."/>
            <person name="Pasternak S."/>
            <person name="Perez L.M."/>
            <person name="Phelps K.A."/>
            <person name="Plopper F.J."/>
            <person name="Qiang B."/>
            <person name="Raymond C."/>
            <person name="Rodriguez R."/>
            <person name="Saenphimmachak C."/>
            <person name="Santibanez J."/>
            <person name="Shen H."/>
            <person name="Shen Y."/>
            <person name="Subramanian S."/>
            <person name="Tabor P.E."/>
            <person name="Verduzco D."/>
            <person name="Waldron L."/>
            <person name="Wang J."/>
            <person name="Wang J."/>
            <person name="Wang Q."/>
            <person name="Williams G.A."/>
            <person name="Wong G.K.-S."/>
            <person name="Yao Z."/>
            <person name="Zhang J."/>
            <person name="Zhang X."/>
            <person name="Zhao G."/>
            <person name="Zhou J."/>
            <person name="Zhou Y."/>
            <person name="Nelson D."/>
            <person name="Lehrach H."/>
            <person name="Reinhardt R."/>
            <person name="Naylor S.L."/>
            <person name="Yang H."/>
            <person name="Olson M."/>
            <person name="Weinstock G."/>
            <person name="Gibbs R.A."/>
        </authorList>
    </citation>
    <scope>NUCLEOTIDE SEQUENCE [LARGE SCALE GENOMIC DNA]</scope>
</reference>
<reference key="3">
    <citation type="journal article" date="2004" name="Genome Res.">
        <title>The status, quality, and expansion of the NIH full-length cDNA project: the Mammalian Gene Collection (MGC).</title>
        <authorList>
            <consortium name="The MGC Project Team"/>
        </authorList>
    </citation>
    <scope>NUCLEOTIDE SEQUENCE [LARGE SCALE MRNA] (ISOFORMS 1 AND 2)</scope>
    <scope>VARIANT ASP-516</scope>
    <source>
        <tissue>Brain</tissue>
    </source>
</reference>
<reference key="4">
    <citation type="journal article" date="2003" name="Proc. Natl. Acad. Sci. U.S.A.">
        <title>The G protein-coupled receptor repertoires of human and mouse.</title>
        <authorList>
            <person name="Vassilatis D.K."/>
            <person name="Hohmann J.G."/>
            <person name="Zeng H."/>
            <person name="Li F."/>
            <person name="Ranchalis J.E."/>
            <person name="Mortrud M.T."/>
            <person name="Brown A."/>
            <person name="Rodriguez S.S."/>
            <person name="Weller J.R."/>
            <person name="Wright A.C."/>
            <person name="Bergmann J.E."/>
            <person name="Gaitanaris G.A."/>
        </authorList>
    </citation>
    <scope>NUCLEOTIDE SEQUENCE [LARGE SCALE MRNA] OF 138-330 (ISOFORM 1)</scope>
</reference>
<reference key="5">
    <citation type="journal article" date="2023" name="Nat. Med.">
        <title>Genetic association analysis of 77,539 genomes reveals rare disease etiologies.</title>
        <authorList>
            <consortium name="Genomics England Research Consortium"/>
            <person name="Greene D."/>
            <person name="Pirri D."/>
            <person name="Frudd K."/>
            <person name="Sackey E."/>
            <person name="Al-Owain M."/>
            <person name="Giese A.P.J."/>
            <person name="Ramzan K."/>
            <person name="Riaz S."/>
            <person name="Yamanaka I."/>
            <person name="Boeckx N."/>
            <person name="Thys C."/>
            <person name="Gelb B.D."/>
            <person name="Brennan P."/>
            <person name="Hartill V."/>
            <person name="Harvengt J."/>
            <person name="Kosho T."/>
            <person name="Mansour S."/>
            <person name="Masuno M."/>
            <person name="Ohata T."/>
            <person name="Stewart H."/>
            <person name="Taibah K."/>
            <person name="Turner C.L.S."/>
            <person name="Imtiaz F."/>
            <person name="Riazuddin S."/>
            <person name="Morisaki T."/>
            <person name="Ostergaard P."/>
            <person name="Loeys B.L."/>
            <person name="Morisaki H."/>
            <person name="Ahmed Z.M."/>
            <person name="Birdsey G.M."/>
            <person name="Freson K."/>
            <person name="Mumford A."/>
            <person name="Turro E."/>
        </authorList>
    </citation>
    <scope>INVOLVEMENT IN DFNB121</scope>
</reference>
<reference key="6">
    <citation type="journal article" date="2023" name="Sci. Rep.">
        <title>Novel GPR156 variants confirm its role in moderate sensorineural hearing loss.</title>
        <authorList>
            <person name="Ramzan M."/>
            <person name="Bozan N."/>
            <person name="Seyhan S."/>
            <person name="Zafeer M.F."/>
            <person name="Ayral A."/>
            <person name="Duman D."/>
            <person name="Bademci G."/>
            <person name="Tekin M."/>
        </authorList>
    </citation>
    <scope>INVOLVEMENT IN DFNB121</scope>
</reference>
<reference key="7">
    <citation type="journal article" date="2024" name="Nat. Struct. Mol. Biol.">
        <title>Constitutive activation mechanism of a class C GPCR.</title>
        <authorList>
            <person name="Shin J."/>
            <person name="Park J."/>
            <person name="Jeong J."/>
            <person name="Lam J.H."/>
            <person name="Qiu X."/>
            <person name="Wu D."/>
            <person name="Kim K."/>
            <person name="Lee J.Y."/>
            <person name="Robinson C.V."/>
            <person name="Hyun J."/>
            <person name="Katritch V."/>
            <person name="Kim K.P."/>
            <person name="Cho Y."/>
        </authorList>
    </citation>
    <scope>STRUCTURE BY ELECTRON MICROSCOPY (2.73 ANGSTROMS) OF 1-557</scope>
</reference>
<name>GP156_HUMAN</name>
<protein>
    <recommendedName>
        <fullName>Probable G-protein coupled receptor 156</fullName>
    </recommendedName>
    <alternativeName>
        <fullName>G-protein coupled receptor PGR28</fullName>
    </alternativeName>
    <alternativeName>
        <fullName>GABAB-related G-protein coupled receptor</fullName>
    </alternativeName>
</protein>
<proteinExistence type="evidence at protein level"/>